<sequence length="150" mass="16562">MTAKSRILVLNGPNLNLLGLREPTHYGSQTLEQIVATLRDQAQKADIELEHLQSNREYELIEAIHQAFGKVDFIIINPAAFTHTSVALRDALLGVAIPFIEVHLSNVHAREPFRHHSYLSDKAQGVICGLGAQGYEFALSAAIRALQAKQ</sequence>
<proteinExistence type="inferred from homology"/>
<organism>
    <name type="scientific">Vibrio cholerae serotype O1 (strain M66-2)</name>
    <dbReference type="NCBI Taxonomy" id="579112"/>
    <lineage>
        <taxon>Bacteria</taxon>
        <taxon>Pseudomonadati</taxon>
        <taxon>Pseudomonadota</taxon>
        <taxon>Gammaproteobacteria</taxon>
        <taxon>Vibrionales</taxon>
        <taxon>Vibrionaceae</taxon>
        <taxon>Vibrio</taxon>
    </lineage>
</organism>
<protein>
    <recommendedName>
        <fullName evidence="1">3-dehydroquinate dehydratase</fullName>
        <shortName evidence="1">3-dehydroquinase</shortName>
        <ecNumber evidence="1">4.2.1.10</ecNumber>
    </recommendedName>
    <alternativeName>
        <fullName evidence="1">Type II DHQase</fullName>
    </alternativeName>
</protein>
<keyword id="KW-0028">Amino-acid biosynthesis</keyword>
<keyword id="KW-0057">Aromatic amino acid biosynthesis</keyword>
<keyword id="KW-0456">Lyase</keyword>
<gene>
    <name evidence="1" type="primary">aroQ</name>
    <name type="ordered locus">VCM66_0282</name>
</gene>
<feature type="chain" id="PRO_1000123701" description="3-dehydroquinate dehydratase">
    <location>
        <begin position="1"/>
        <end position="150"/>
    </location>
</feature>
<feature type="active site" description="Proton acceptor" evidence="1">
    <location>
        <position position="26"/>
    </location>
</feature>
<feature type="active site" description="Proton donor" evidence="1">
    <location>
        <position position="103"/>
    </location>
</feature>
<feature type="binding site" evidence="1">
    <location>
        <position position="77"/>
    </location>
    <ligand>
        <name>substrate</name>
    </ligand>
</feature>
<feature type="binding site" evidence="1">
    <location>
        <position position="83"/>
    </location>
    <ligand>
        <name>substrate</name>
    </ligand>
</feature>
<feature type="binding site" evidence="1">
    <location>
        <position position="90"/>
    </location>
    <ligand>
        <name>substrate</name>
    </ligand>
</feature>
<feature type="binding site" evidence="1">
    <location>
        <begin position="104"/>
        <end position="105"/>
    </location>
    <ligand>
        <name>substrate</name>
    </ligand>
</feature>
<feature type="binding site" evidence="1">
    <location>
        <position position="114"/>
    </location>
    <ligand>
        <name>substrate</name>
    </ligand>
</feature>
<feature type="site" description="Transition state stabilizer" evidence="1">
    <location>
        <position position="21"/>
    </location>
</feature>
<reference key="1">
    <citation type="journal article" date="2008" name="PLoS ONE">
        <title>A recalibrated molecular clock and independent origins for the cholera pandemic clones.</title>
        <authorList>
            <person name="Feng L."/>
            <person name="Reeves P.R."/>
            <person name="Lan R."/>
            <person name="Ren Y."/>
            <person name="Gao C."/>
            <person name="Zhou Z."/>
            <person name="Ren Y."/>
            <person name="Cheng J."/>
            <person name="Wang W."/>
            <person name="Wang J."/>
            <person name="Qian W."/>
            <person name="Li D."/>
            <person name="Wang L."/>
        </authorList>
    </citation>
    <scope>NUCLEOTIDE SEQUENCE [LARGE SCALE GENOMIC DNA]</scope>
    <source>
        <strain>M66-2</strain>
    </source>
</reference>
<comment type="function">
    <text evidence="1">Catalyzes a trans-dehydration via an enolate intermediate.</text>
</comment>
<comment type="catalytic activity">
    <reaction evidence="1">
        <text>3-dehydroquinate = 3-dehydroshikimate + H2O</text>
        <dbReference type="Rhea" id="RHEA:21096"/>
        <dbReference type="ChEBI" id="CHEBI:15377"/>
        <dbReference type="ChEBI" id="CHEBI:16630"/>
        <dbReference type="ChEBI" id="CHEBI:32364"/>
        <dbReference type="EC" id="4.2.1.10"/>
    </reaction>
</comment>
<comment type="pathway">
    <text evidence="1">Metabolic intermediate biosynthesis; chorismate biosynthesis; chorismate from D-erythrose 4-phosphate and phosphoenolpyruvate: step 3/7.</text>
</comment>
<comment type="subunit">
    <text evidence="1">Homododecamer.</text>
</comment>
<comment type="similarity">
    <text evidence="1">Belongs to the type-II 3-dehydroquinase family.</text>
</comment>
<name>AROQ_VIBCM</name>
<dbReference type="EC" id="4.2.1.10" evidence="1"/>
<dbReference type="EMBL" id="CP001233">
    <property type="protein sequence ID" value="ACP04611.1"/>
    <property type="molecule type" value="Genomic_DNA"/>
</dbReference>
<dbReference type="RefSeq" id="WP_000125574.1">
    <property type="nucleotide sequence ID" value="NC_012578.1"/>
</dbReference>
<dbReference type="SMR" id="C3LQQ3"/>
<dbReference type="KEGG" id="vcm:VCM66_0282"/>
<dbReference type="HOGENOM" id="CLU_090968_1_0_6"/>
<dbReference type="UniPathway" id="UPA00053">
    <property type="reaction ID" value="UER00086"/>
</dbReference>
<dbReference type="Proteomes" id="UP000001217">
    <property type="component" value="Chromosome I"/>
</dbReference>
<dbReference type="GO" id="GO:0003855">
    <property type="term" value="F:3-dehydroquinate dehydratase activity"/>
    <property type="evidence" value="ECO:0007669"/>
    <property type="project" value="UniProtKB-UniRule"/>
</dbReference>
<dbReference type="GO" id="GO:0008652">
    <property type="term" value="P:amino acid biosynthetic process"/>
    <property type="evidence" value="ECO:0007669"/>
    <property type="project" value="UniProtKB-KW"/>
</dbReference>
<dbReference type="GO" id="GO:0009073">
    <property type="term" value="P:aromatic amino acid family biosynthetic process"/>
    <property type="evidence" value="ECO:0007669"/>
    <property type="project" value="UniProtKB-KW"/>
</dbReference>
<dbReference type="GO" id="GO:0009423">
    <property type="term" value="P:chorismate biosynthetic process"/>
    <property type="evidence" value="ECO:0007669"/>
    <property type="project" value="UniProtKB-UniRule"/>
</dbReference>
<dbReference type="GO" id="GO:0019631">
    <property type="term" value="P:quinate catabolic process"/>
    <property type="evidence" value="ECO:0007669"/>
    <property type="project" value="TreeGrafter"/>
</dbReference>
<dbReference type="CDD" id="cd00466">
    <property type="entry name" value="DHQase_II"/>
    <property type="match status" value="1"/>
</dbReference>
<dbReference type="Gene3D" id="3.40.50.9100">
    <property type="entry name" value="Dehydroquinase, class II"/>
    <property type="match status" value="1"/>
</dbReference>
<dbReference type="HAMAP" id="MF_00169">
    <property type="entry name" value="AroQ"/>
    <property type="match status" value="1"/>
</dbReference>
<dbReference type="InterPro" id="IPR001874">
    <property type="entry name" value="DHquinase_II"/>
</dbReference>
<dbReference type="InterPro" id="IPR018509">
    <property type="entry name" value="DHquinase_II_CS"/>
</dbReference>
<dbReference type="InterPro" id="IPR036441">
    <property type="entry name" value="DHquinase_II_sf"/>
</dbReference>
<dbReference type="NCBIfam" id="TIGR01088">
    <property type="entry name" value="aroQ"/>
    <property type="match status" value="1"/>
</dbReference>
<dbReference type="NCBIfam" id="NF003804">
    <property type="entry name" value="PRK05395.1-1"/>
    <property type="match status" value="1"/>
</dbReference>
<dbReference type="NCBIfam" id="NF003805">
    <property type="entry name" value="PRK05395.1-2"/>
    <property type="match status" value="1"/>
</dbReference>
<dbReference type="NCBIfam" id="NF003806">
    <property type="entry name" value="PRK05395.1-3"/>
    <property type="match status" value="1"/>
</dbReference>
<dbReference type="NCBIfam" id="NF003807">
    <property type="entry name" value="PRK05395.1-4"/>
    <property type="match status" value="1"/>
</dbReference>
<dbReference type="PANTHER" id="PTHR21272">
    <property type="entry name" value="CATABOLIC 3-DEHYDROQUINASE"/>
    <property type="match status" value="1"/>
</dbReference>
<dbReference type="PANTHER" id="PTHR21272:SF3">
    <property type="entry name" value="CATABOLIC 3-DEHYDROQUINASE"/>
    <property type="match status" value="1"/>
</dbReference>
<dbReference type="Pfam" id="PF01220">
    <property type="entry name" value="DHquinase_II"/>
    <property type="match status" value="1"/>
</dbReference>
<dbReference type="PIRSF" id="PIRSF001399">
    <property type="entry name" value="DHquinase_II"/>
    <property type="match status" value="1"/>
</dbReference>
<dbReference type="SUPFAM" id="SSF52304">
    <property type="entry name" value="Type II 3-dehydroquinate dehydratase"/>
    <property type="match status" value="1"/>
</dbReference>
<dbReference type="PROSITE" id="PS01029">
    <property type="entry name" value="DEHYDROQUINASE_II"/>
    <property type="match status" value="1"/>
</dbReference>
<accession>C3LQQ3</accession>
<evidence type="ECO:0000255" key="1">
    <source>
        <dbReference type="HAMAP-Rule" id="MF_00169"/>
    </source>
</evidence>